<reference key="1">
    <citation type="journal article" date="2006" name="Plant Physiol.">
        <title>The rice mitochondrial genomes and their variations.</title>
        <authorList>
            <person name="Tian X."/>
            <person name="Zheng J."/>
            <person name="Hu S."/>
            <person name="Yu J."/>
        </authorList>
    </citation>
    <scope>NUCLEOTIDE SEQUENCE [GENOMIC DNA]</scope>
    <source>
        <strain>cv. 93-11</strain>
    </source>
</reference>
<evidence type="ECO:0000250" key="1"/>
<evidence type="ECO:0000305" key="2"/>
<organism>
    <name type="scientific">Oryza sativa subsp. indica</name>
    <name type="common">Rice</name>
    <dbReference type="NCBI Taxonomy" id="39946"/>
    <lineage>
        <taxon>Eukaryota</taxon>
        <taxon>Viridiplantae</taxon>
        <taxon>Streptophyta</taxon>
        <taxon>Embryophyta</taxon>
        <taxon>Tracheophyta</taxon>
        <taxon>Spermatophyta</taxon>
        <taxon>Magnoliopsida</taxon>
        <taxon>Liliopsida</taxon>
        <taxon>Poales</taxon>
        <taxon>Poaceae</taxon>
        <taxon>BOP clade</taxon>
        <taxon>Oryzoideae</taxon>
        <taxon>Oryzeae</taxon>
        <taxon>Oryzinae</taxon>
        <taxon>Oryza</taxon>
        <taxon>Oryza sativa</taxon>
    </lineage>
</organism>
<proteinExistence type="inferred from homology"/>
<accession>P0C521</accession>
<accession>P15998</accession>
<accession>Q2F8Z9</accession>
<accession>Q2F952</accession>
<accession>Q7JAI5</accession>
<name>ATPAM_ORYSI</name>
<geneLocation type="mitochondrion"/>
<sequence>MEFSPRAAELTTLLESRMTNFYTNFQVDEIGRVVSVGDGIARVYGLNEIQAGEMVEFASGVKGIALNLENENVGIVVFGSDTAIKEGDLVKRTGSIVDVPAGKAMLGRVVDALGVPIDGKGALSDHERRRVEVKAPGIIERKSVHEPMQTGLKAVDSLVPIGRGQRELIIGDRQTGKTAIAIDTILNQKQMNSRGTNESETLYCVYVAIGQKRSTVAQLVQILSEANALEYSILVAATASDPAPLQFLAPYSGCAMGEYFRDNGMHALIIYDDLSKQAVAYRQMSLLLRRPPGREAFPGDVFYLHSRLLERAAKRSDQTGAGSLTALPVIETQAGDVSAYIPTNVISITDGQICLETELFYRGIRPAINVGLSVSRVGSAAQLKAMKQVCGSLKLELAQYREVAAFAQFGSDLDAATQALLNRGARLTEVSKQPQYEPLPIEKQIVVIYAAVNGFCDRMPLDRISQYEKAILSTINPELLKSFNEKGGLTNERKIELDAFLKQTAKEIN</sequence>
<gene>
    <name type="primary">ATPA</name>
</gene>
<dbReference type="EMBL" id="DQ167399">
    <property type="protein sequence ID" value="AAZ99242.1"/>
    <property type="status" value="ALT_SEQ"/>
    <property type="molecule type" value="Genomic_DNA"/>
</dbReference>
<dbReference type="SMR" id="P0C521"/>
<dbReference type="GO" id="GO:0005743">
    <property type="term" value="C:mitochondrial inner membrane"/>
    <property type="evidence" value="ECO:0007669"/>
    <property type="project" value="UniProtKB-SubCell"/>
</dbReference>
<dbReference type="GO" id="GO:0005739">
    <property type="term" value="C:mitochondrion"/>
    <property type="evidence" value="ECO:0000305"/>
    <property type="project" value="Gramene"/>
</dbReference>
<dbReference type="GO" id="GO:0045259">
    <property type="term" value="C:proton-transporting ATP synthase complex"/>
    <property type="evidence" value="ECO:0007669"/>
    <property type="project" value="UniProtKB-KW"/>
</dbReference>
<dbReference type="GO" id="GO:0043531">
    <property type="term" value="F:ADP binding"/>
    <property type="evidence" value="ECO:0007669"/>
    <property type="project" value="TreeGrafter"/>
</dbReference>
<dbReference type="GO" id="GO:0005524">
    <property type="term" value="F:ATP binding"/>
    <property type="evidence" value="ECO:0007669"/>
    <property type="project" value="UniProtKB-KW"/>
</dbReference>
<dbReference type="GO" id="GO:0046933">
    <property type="term" value="F:proton-transporting ATP synthase activity, rotational mechanism"/>
    <property type="evidence" value="ECO:0007669"/>
    <property type="project" value="InterPro"/>
</dbReference>
<dbReference type="CDD" id="cd18113">
    <property type="entry name" value="ATP-synt_F1_alpha_C"/>
    <property type="match status" value="1"/>
</dbReference>
<dbReference type="CDD" id="cd18116">
    <property type="entry name" value="ATP-synt_F1_alpha_N"/>
    <property type="match status" value="1"/>
</dbReference>
<dbReference type="CDD" id="cd01132">
    <property type="entry name" value="F1-ATPase_alpha_CD"/>
    <property type="match status" value="1"/>
</dbReference>
<dbReference type="FunFam" id="1.20.150.20:FF:000001">
    <property type="entry name" value="ATP synthase subunit alpha"/>
    <property type="match status" value="1"/>
</dbReference>
<dbReference type="FunFam" id="2.40.30.20:FF:000001">
    <property type="entry name" value="ATP synthase subunit alpha"/>
    <property type="match status" value="1"/>
</dbReference>
<dbReference type="FunFam" id="3.40.50.300:FF:002432">
    <property type="entry name" value="ATP synthase subunit alpha, mitochondrial"/>
    <property type="match status" value="1"/>
</dbReference>
<dbReference type="Gene3D" id="2.40.30.20">
    <property type="match status" value="1"/>
</dbReference>
<dbReference type="Gene3D" id="1.20.150.20">
    <property type="entry name" value="ATP synthase alpha/beta chain, C-terminal domain"/>
    <property type="match status" value="1"/>
</dbReference>
<dbReference type="Gene3D" id="3.40.50.300">
    <property type="entry name" value="P-loop containing nucleotide triphosphate hydrolases"/>
    <property type="match status" value="1"/>
</dbReference>
<dbReference type="HAMAP" id="MF_01346">
    <property type="entry name" value="ATP_synth_alpha_bact"/>
    <property type="match status" value="1"/>
</dbReference>
<dbReference type="InterPro" id="IPR023366">
    <property type="entry name" value="ATP_synth_asu-like_sf"/>
</dbReference>
<dbReference type="InterPro" id="IPR000793">
    <property type="entry name" value="ATP_synth_asu_C"/>
</dbReference>
<dbReference type="InterPro" id="IPR038376">
    <property type="entry name" value="ATP_synth_asu_C_sf"/>
</dbReference>
<dbReference type="InterPro" id="IPR033732">
    <property type="entry name" value="ATP_synth_F1_a_nt-bd_dom"/>
</dbReference>
<dbReference type="InterPro" id="IPR005294">
    <property type="entry name" value="ATP_synth_F1_asu"/>
</dbReference>
<dbReference type="InterPro" id="IPR020003">
    <property type="entry name" value="ATPase_a/bsu_AS"/>
</dbReference>
<dbReference type="InterPro" id="IPR004100">
    <property type="entry name" value="ATPase_F1/V1/A1_a/bsu_N"/>
</dbReference>
<dbReference type="InterPro" id="IPR036121">
    <property type="entry name" value="ATPase_F1/V1/A1_a/bsu_N_sf"/>
</dbReference>
<dbReference type="InterPro" id="IPR000194">
    <property type="entry name" value="ATPase_F1/V1/A1_a/bsu_nucl-bd"/>
</dbReference>
<dbReference type="InterPro" id="IPR027417">
    <property type="entry name" value="P-loop_NTPase"/>
</dbReference>
<dbReference type="NCBIfam" id="TIGR00962">
    <property type="entry name" value="atpA"/>
    <property type="match status" value="1"/>
</dbReference>
<dbReference type="NCBIfam" id="NF009884">
    <property type="entry name" value="PRK13343.1"/>
    <property type="match status" value="1"/>
</dbReference>
<dbReference type="PANTHER" id="PTHR48082">
    <property type="entry name" value="ATP SYNTHASE SUBUNIT ALPHA, MITOCHONDRIAL"/>
    <property type="match status" value="1"/>
</dbReference>
<dbReference type="PANTHER" id="PTHR48082:SF2">
    <property type="entry name" value="ATP SYNTHASE SUBUNIT ALPHA, MITOCHONDRIAL"/>
    <property type="match status" value="1"/>
</dbReference>
<dbReference type="Pfam" id="PF00006">
    <property type="entry name" value="ATP-synt_ab"/>
    <property type="match status" value="1"/>
</dbReference>
<dbReference type="Pfam" id="PF00306">
    <property type="entry name" value="ATP-synt_ab_C"/>
    <property type="match status" value="1"/>
</dbReference>
<dbReference type="Pfam" id="PF02874">
    <property type="entry name" value="ATP-synt_ab_N"/>
    <property type="match status" value="1"/>
</dbReference>
<dbReference type="PIRSF" id="PIRSF039088">
    <property type="entry name" value="F_ATPase_subunit_alpha"/>
    <property type="match status" value="1"/>
</dbReference>
<dbReference type="SUPFAM" id="SSF47917">
    <property type="entry name" value="C-terminal domain of alpha and beta subunits of F1 ATP synthase"/>
    <property type="match status" value="1"/>
</dbReference>
<dbReference type="SUPFAM" id="SSF50615">
    <property type="entry name" value="N-terminal domain of alpha and beta subunits of F1 ATP synthase"/>
    <property type="match status" value="1"/>
</dbReference>
<dbReference type="SUPFAM" id="SSF52540">
    <property type="entry name" value="P-loop containing nucleoside triphosphate hydrolases"/>
    <property type="match status" value="1"/>
</dbReference>
<dbReference type="PROSITE" id="PS00152">
    <property type="entry name" value="ATPASE_ALPHA_BETA"/>
    <property type="match status" value="1"/>
</dbReference>
<feature type="chain" id="PRO_0000290116" description="ATP synthase subunit alpha, mitochondrial">
    <location>
        <begin position="1"/>
        <end position="509"/>
    </location>
</feature>
<feature type="binding site" evidence="1">
    <location>
        <begin position="171"/>
        <end position="178"/>
    </location>
    <ligand>
        <name>ATP</name>
        <dbReference type="ChEBI" id="CHEBI:30616"/>
    </ligand>
</feature>
<feature type="site" description="Required for activity" evidence="1">
    <location>
        <position position="373"/>
    </location>
</feature>
<keyword id="KW-0066">ATP synthesis</keyword>
<keyword id="KW-0067">ATP-binding</keyword>
<keyword id="KW-0139">CF(1)</keyword>
<keyword id="KW-0375">Hydrogen ion transport</keyword>
<keyword id="KW-0406">Ion transport</keyword>
<keyword id="KW-0472">Membrane</keyword>
<keyword id="KW-0496">Mitochondrion</keyword>
<keyword id="KW-0999">Mitochondrion inner membrane</keyword>
<keyword id="KW-0547">Nucleotide-binding</keyword>
<keyword id="KW-0691">RNA editing</keyword>
<keyword id="KW-0813">Transport</keyword>
<protein>
    <recommendedName>
        <fullName>ATP synthase subunit alpha, mitochondrial</fullName>
    </recommendedName>
</protein>
<comment type="function">
    <text evidence="1">Mitochondrial membrane ATP synthase (F(1)F(0) ATP synthase or Complex V) produces ATP from ADP in the presence of a proton gradient across the membrane which is generated by electron transport complexes of the respiratory chain. F-type ATPases consist of two structural domains, F(1) - containing the extramembraneous catalytic core, and F(0) - containing the membrane proton channel, linked together by a central stalk and a peripheral stalk. During catalysis, ATP synthesis in the catalytic domain of F(1) is coupled via a rotary mechanism of the central stalk subunits to proton translocation. Subunits alpha and beta form the catalytic core in F(1). Rotation of the central stalk against the surrounding alpha(3)beta(3) subunits leads to hydrolysis of ATP in three separate catalytic sites on the beta subunits. Subunit alpha does not bear the catalytic high-affinity ATP-binding sites (By similarity).</text>
</comment>
<comment type="subunit">
    <text>F-type ATPases have 2 components, CF(1) - the catalytic core - and CF(0) - the membrane proton channel. CF(1) has five subunits: alpha(3), beta(3), gamma(1), delta(1), epsilon(1). CF(0) has three main subunits: a, b and c.</text>
</comment>
<comment type="subcellular location">
    <subcellularLocation>
        <location>Mitochondrion</location>
    </subcellularLocation>
    <subcellularLocation>
        <location>Mitochondrion inner membrane</location>
    </subcellularLocation>
    <text>Peripheral membrane protein.</text>
</comment>
<comment type="RNA editing">
    <location>
        <position position="393" evidence="1"/>
    </location>
    <location>
        <position position="431" evidence="1"/>
    </location>
    <location>
        <position position="497" evidence="1"/>
    </location>
    <location>
        <position position="500" evidence="1"/>
    </location>
</comment>
<comment type="similarity">
    <text evidence="2">Belongs to the ATPase alpha/beta chains family.</text>
</comment>